<organism>
    <name type="scientific">Staphylococcus aureus (strain bovine RF122 / ET3-1)</name>
    <dbReference type="NCBI Taxonomy" id="273036"/>
    <lineage>
        <taxon>Bacteria</taxon>
        <taxon>Bacillati</taxon>
        <taxon>Bacillota</taxon>
        <taxon>Bacilli</taxon>
        <taxon>Bacillales</taxon>
        <taxon>Staphylococcaceae</taxon>
        <taxon>Staphylococcus</taxon>
    </lineage>
</organism>
<reference key="1">
    <citation type="journal article" date="2007" name="PLoS ONE">
        <title>Molecular correlates of host specialization in Staphylococcus aureus.</title>
        <authorList>
            <person name="Herron-Olson L."/>
            <person name="Fitzgerald J.R."/>
            <person name="Musser J.M."/>
            <person name="Kapur V."/>
        </authorList>
    </citation>
    <scope>NUCLEOTIDE SEQUENCE [LARGE SCALE GENOMIC DNA]</scope>
    <source>
        <strain>bovine RF122 / ET3-1</strain>
    </source>
</reference>
<comment type="function">
    <text evidence="2">Destroys superoxide anion radicals which are normally produced within the cells and which are toxic to biological systems. Catalyzes the dismutation of superoxide anion radicals into O2 and H2O2 by successive reduction and oxidation of the transition metal ion at the active site.</text>
</comment>
<comment type="catalytic activity">
    <reaction evidence="2">
        <text>2 superoxide + 2 H(+) = H2O2 + O2</text>
        <dbReference type="Rhea" id="RHEA:20696"/>
        <dbReference type="ChEBI" id="CHEBI:15378"/>
        <dbReference type="ChEBI" id="CHEBI:15379"/>
        <dbReference type="ChEBI" id="CHEBI:16240"/>
        <dbReference type="ChEBI" id="CHEBI:18421"/>
        <dbReference type="EC" id="1.15.1.1"/>
    </reaction>
    <physiologicalReaction direction="left-to-right" evidence="2">
        <dbReference type="Rhea" id="RHEA:20697"/>
    </physiologicalReaction>
</comment>
<comment type="cofactor">
    <cofactor evidence="2">
        <name>Mn(2+)</name>
        <dbReference type="ChEBI" id="CHEBI:29035"/>
    </cofactor>
    <cofactor evidence="2">
        <name>Fe(3+)</name>
        <dbReference type="ChEBI" id="CHEBI:29034"/>
    </cofactor>
    <text evidence="2">Binds 1 Mn(2+) or Fe(3+) ion per subunit.</text>
</comment>
<comment type="subunit">
    <text evidence="1">Homodimer. Can also form a heterodimer with SodM (By similarity).</text>
</comment>
<comment type="similarity">
    <text evidence="3">Belongs to the iron/manganese superoxide dismutase family.</text>
</comment>
<keyword id="KW-0408">Iron</keyword>
<keyword id="KW-0464">Manganese</keyword>
<keyword id="KW-0479">Metal-binding</keyword>
<keyword id="KW-0560">Oxidoreductase</keyword>
<keyword id="KW-0346">Stress response</keyword>
<protein>
    <recommendedName>
        <fullName>Superoxide dismutase [Mn/Fe] 1</fullName>
        <ecNumber evidence="2">1.15.1.1</ecNumber>
    </recommendedName>
</protein>
<evidence type="ECO:0000250" key="1"/>
<evidence type="ECO:0000250" key="2">
    <source>
        <dbReference type="UniProtKB" id="P80293"/>
    </source>
</evidence>
<evidence type="ECO:0000305" key="3"/>
<accession>Q2YT26</accession>
<proteinExistence type="inferred from homology"/>
<dbReference type="EC" id="1.15.1.1" evidence="2"/>
<dbReference type="EMBL" id="AJ938182">
    <property type="protein sequence ID" value="CAI81114.1"/>
    <property type="molecule type" value="Genomic_DNA"/>
</dbReference>
<dbReference type="RefSeq" id="WP_000863556.1">
    <property type="nucleotide sequence ID" value="NC_007622.1"/>
</dbReference>
<dbReference type="SMR" id="Q2YT26"/>
<dbReference type="KEGG" id="sab:SAB1425c"/>
<dbReference type="HOGENOM" id="CLU_031625_0_1_9"/>
<dbReference type="GO" id="GO:0005737">
    <property type="term" value="C:cytoplasm"/>
    <property type="evidence" value="ECO:0007669"/>
    <property type="project" value="TreeGrafter"/>
</dbReference>
<dbReference type="GO" id="GO:0046872">
    <property type="term" value="F:metal ion binding"/>
    <property type="evidence" value="ECO:0007669"/>
    <property type="project" value="UniProtKB-KW"/>
</dbReference>
<dbReference type="GO" id="GO:0004784">
    <property type="term" value="F:superoxide dismutase activity"/>
    <property type="evidence" value="ECO:0007669"/>
    <property type="project" value="UniProtKB-EC"/>
</dbReference>
<dbReference type="FunFam" id="1.10.287.990:FF:000001">
    <property type="entry name" value="Superoxide dismutase"/>
    <property type="match status" value="1"/>
</dbReference>
<dbReference type="FunFam" id="3.55.40.20:FF:000001">
    <property type="entry name" value="Superoxide dismutase"/>
    <property type="match status" value="1"/>
</dbReference>
<dbReference type="Gene3D" id="1.10.287.990">
    <property type="entry name" value="Fe,Mn superoxide dismutase (SOD) domain"/>
    <property type="match status" value="1"/>
</dbReference>
<dbReference type="Gene3D" id="3.55.40.20">
    <property type="entry name" value="Iron/manganese superoxide dismutase, C-terminal domain"/>
    <property type="match status" value="1"/>
</dbReference>
<dbReference type="InterPro" id="IPR001189">
    <property type="entry name" value="Mn/Fe_SOD"/>
</dbReference>
<dbReference type="InterPro" id="IPR019833">
    <property type="entry name" value="Mn/Fe_SOD_BS"/>
</dbReference>
<dbReference type="InterPro" id="IPR019832">
    <property type="entry name" value="Mn/Fe_SOD_C"/>
</dbReference>
<dbReference type="InterPro" id="IPR019831">
    <property type="entry name" value="Mn/Fe_SOD_N"/>
</dbReference>
<dbReference type="InterPro" id="IPR036324">
    <property type="entry name" value="Mn/Fe_SOD_N_sf"/>
</dbReference>
<dbReference type="InterPro" id="IPR036314">
    <property type="entry name" value="SOD_C_sf"/>
</dbReference>
<dbReference type="PANTHER" id="PTHR43595">
    <property type="entry name" value="37S RIBOSOMAL PROTEIN S26, MITOCHONDRIAL"/>
    <property type="match status" value="1"/>
</dbReference>
<dbReference type="PANTHER" id="PTHR43595:SF2">
    <property type="entry name" value="SMALL RIBOSOMAL SUBUNIT PROTEIN MS42"/>
    <property type="match status" value="1"/>
</dbReference>
<dbReference type="Pfam" id="PF02777">
    <property type="entry name" value="Sod_Fe_C"/>
    <property type="match status" value="1"/>
</dbReference>
<dbReference type="Pfam" id="PF00081">
    <property type="entry name" value="Sod_Fe_N"/>
    <property type="match status" value="1"/>
</dbReference>
<dbReference type="PIRSF" id="PIRSF000349">
    <property type="entry name" value="SODismutase"/>
    <property type="match status" value="1"/>
</dbReference>
<dbReference type="PRINTS" id="PR01703">
    <property type="entry name" value="MNSODISMTASE"/>
</dbReference>
<dbReference type="SUPFAM" id="SSF54719">
    <property type="entry name" value="Fe,Mn superoxide dismutase (SOD), C-terminal domain"/>
    <property type="match status" value="1"/>
</dbReference>
<dbReference type="SUPFAM" id="SSF46609">
    <property type="entry name" value="Fe,Mn superoxide dismutase (SOD), N-terminal domain"/>
    <property type="match status" value="1"/>
</dbReference>
<dbReference type="PROSITE" id="PS00088">
    <property type="entry name" value="SOD_MN"/>
    <property type="match status" value="1"/>
</dbReference>
<name>SODM1_STAAB</name>
<gene>
    <name type="primary">sodA</name>
    <name type="ordered locus">SAB1425c</name>
</gene>
<sequence length="199" mass="22711">MAFELPKLPYAFDALEPHFDKETMEIHHDRHHNTYVTKLNAAVEGTDLESKSIEEIVANLDSVPANIQTAVRNNGGGHLNHSLFWELLSPNSEEKGTVVEKIKEQWGSLEEFKKEFADKAAARFGSGWAWLVVNNGQLEIVTTPNQDNPLTEGKTPILGLDVWEHAYYLKYQNKRPDYIGAFWNVVNWEKVDELYNATK</sequence>
<feature type="chain" id="PRO_0000293961" description="Superoxide dismutase [Mn/Fe] 1">
    <location>
        <begin position="1"/>
        <end position="199"/>
    </location>
</feature>
<feature type="binding site" evidence="2">
    <location>
        <position position="27"/>
    </location>
    <ligand>
        <name>Fe(3+)</name>
        <dbReference type="ChEBI" id="CHEBI:29034"/>
    </ligand>
</feature>
<feature type="binding site" evidence="2">
    <location>
        <position position="27"/>
    </location>
    <ligand>
        <name>Mn(2+)</name>
        <dbReference type="ChEBI" id="CHEBI:29035"/>
    </ligand>
</feature>
<feature type="binding site" evidence="2">
    <location>
        <position position="81"/>
    </location>
    <ligand>
        <name>Fe(3+)</name>
        <dbReference type="ChEBI" id="CHEBI:29034"/>
    </ligand>
</feature>
<feature type="binding site" evidence="2">
    <location>
        <position position="81"/>
    </location>
    <ligand>
        <name>Mn(2+)</name>
        <dbReference type="ChEBI" id="CHEBI:29035"/>
    </ligand>
</feature>
<feature type="binding site" evidence="2">
    <location>
        <position position="161"/>
    </location>
    <ligand>
        <name>Fe(3+)</name>
        <dbReference type="ChEBI" id="CHEBI:29034"/>
    </ligand>
</feature>
<feature type="binding site" evidence="2">
    <location>
        <position position="161"/>
    </location>
    <ligand>
        <name>Mn(2+)</name>
        <dbReference type="ChEBI" id="CHEBI:29035"/>
    </ligand>
</feature>
<feature type="binding site" evidence="2">
    <location>
        <position position="165"/>
    </location>
    <ligand>
        <name>Fe(3+)</name>
        <dbReference type="ChEBI" id="CHEBI:29034"/>
    </ligand>
</feature>
<feature type="binding site" evidence="2">
    <location>
        <position position="165"/>
    </location>
    <ligand>
        <name>Mn(2+)</name>
        <dbReference type="ChEBI" id="CHEBI:29035"/>
    </ligand>
</feature>